<organism>
    <name type="scientific">Encephalitozoon cuniculi (strain GB-M1)</name>
    <name type="common">Microsporidian parasite</name>
    <dbReference type="NCBI Taxonomy" id="284813"/>
    <lineage>
        <taxon>Eukaryota</taxon>
        <taxon>Fungi</taxon>
        <taxon>Fungi incertae sedis</taxon>
        <taxon>Microsporidia</taxon>
        <taxon>Unikaryonidae</taxon>
        <taxon>Encephalitozoon</taxon>
    </lineage>
</organism>
<gene>
    <name type="ordered locus">ECU04_1000</name>
</gene>
<reference key="1">
    <citation type="journal article" date="2001" name="Nature">
        <title>Genome sequence and gene compaction of the eukaryote parasite Encephalitozoon cuniculi.</title>
        <authorList>
            <person name="Katinka M.D."/>
            <person name="Duprat S."/>
            <person name="Cornillot E."/>
            <person name="Metenier G."/>
            <person name="Thomarat F."/>
            <person name="Prensier G."/>
            <person name="Barbe V."/>
            <person name="Peyretaillade E."/>
            <person name="Brottier P."/>
            <person name="Wincker P."/>
            <person name="Delbac F."/>
            <person name="El Alaoui H."/>
            <person name="Peyret P."/>
            <person name="Saurin W."/>
            <person name="Gouy M."/>
            <person name="Weissenbach J."/>
            <person name="Vivares C.P."/>
        </authorList>
    </citation>
    <scope>NUCLEOTIDE SEQUENCE [LARGE SCALE GENOMIC DNA]</scope>
    <source>
        <strain>GB-M1</strain>
    </source>
</reference>
<reference key="2">
    <citation type="journal article" date="2009" name="BMC Genomics">
        <title>Identification of transcriptional signals in Encephalitozoon cuniculi widespread among Microsporidia phylum: support for accurate structural genome annotation.</title>
        <authorList>
            <person name="Peyretaillade E."/>
            <person name="Goncalves O."/>
            <person name="Terrat S."/>
            <person name="Dugat-Bony E."/>
            <person name="Wincker P."/>
            <person name="Cornman R.S."/>
            <person name="Evans J.D."/>
            <person name="Delbac F."/>
            <person name="Peyret P."/>
        </authorList>
    </citation>
    <scope>GENOME REANNOTATION</scope>
    <source>
        <strain>GB-M1</strain>
    </source>
</reference>
<reference key="3">
    <citation type="journal article" date="2006" name="Proteomics">
        <title>Proteomic analysis of the eukaryotic parasite Encephalitozoon cuniculi (microsporidia): a reference map for proteins expressed in late sporogonial stages.</title>
        <authorList>
            <person name="Brosson D."/>
            <person name="Kuhn L."/>
            <person name="Delbac F."/>
            <person name="Garin J."/>
            <person name="Vivares C.P."/>
            <person name="Texier C."/>
        </authorList>
    </citation>
    <scope>IDENTIFICATION BY MASS SPECTROMETRY [LARGE SCALE ANALYSIS]</scope>
    <scope>DEVELOPMENTAL STAGE</scope>
    <scope>SUBCELLULAR LOCATION</scope>
</reference>
<evidence type="ECO:0000250" key="1"/>
<evidence type="ECO:0000255" key="2"/>
<evidence type="ECO:0000255" key="3">
    <source>
        <dbReference type="PROSITE-ProRule" id="PRU00782"/>
    </source>
</evidence>
<evidence type="ECO:0000255" key="4">
    <source>
        <dbReference type="PROSITE-ProRule" id="PRU01190"/>
    </source>
</evidence>
<evidence type="ECO:0000256" key="5">
    <source>
        <dbReference type="SAM" id="MobiDB-lite"/>
    </source>
</evidence>
<evidence type="ECO:0000269" key="6">
    <source>
    </source>
</evidence>
<evidence type="ECO:0000305" key="7"/>
<sequence>MEGTTNKDIGSGSSRPGGEVSVSDEIQRRFMEKKWVWAPSSKEAYVCGFVVKEEGDVLEIDCRGVIVRHKSCEVFRMNPPKFDMVDDLAELSYLNEPGVLHNLRRRYQNGRIYTYSGLFLLAINPYKDLRIYGEKDARKYTLSKKYELEPHIFAVANEAYRLMLSNRENQSILITGESGAGKTENTKRVVEFLAMVGGCKGMEVSIDRQIIDANPILEAFGNAQTVKNDNSSRFGKFIKIKFNGGNICGAHIEKYLLEKSRVTSQNRNERNYHIFYQLLGCDDQMLKKQLFLDGEPKDYRFLKDSRFKIPDVDDAKEFRSLRESMRVLGIGEEEQIGYFKIVSAILHLGNIEFREKDGAAEIANLDVAEKACKLLSIPLAEFIKRLIHPVIKAGNEYVAHSRSREQALKIVDGLSRILYDKMFEGVIDRINMSLDSPHKGNFIGVLDIAGFEIFEKNSFEQLCINYTNEKLQQFFNHHMFILEQEVYRQENIEWDFIDFGLDLQPTIDLIEKSNPIGILSYLDEECVMPMATEKTFLGKLMKNIRDEKFEVDKIRDAFVLNHYAGDVEYTVDDWLSKNKDSHSEALTSLIRASGSELVSRLSLNEEAVKKGFFRTVSQKHKEQLASLMSELRRTNPHFVRCIIPNLEKSGEHLDNGIVLGQLKCNGVLEGIRISRQGFPSRMGHREFVQRYRIMMKEKILVDESWDEGVCMELYKEIGGKILSEIGISTSQYRLGRTKVFFRQGVLADIEDMRDVKVSEVVKEIQALIRRRLAFRKYNQAQRRMQGILVIQRNGRICCDLQRWNWWRLYLKIKPLLDVRKRDGEMKEKEAMIQEYARMLDAEKSRREEVEDMLKAMSLKRELLEKSVEDEKRFSMEKDELLMALRYKSDETAQELEKARKEVFDGHEERKMWETRVNEVAIQLEEKDSEILRLRREVSEQKGALSQQEKEICSLREEVVSKLSEKDAMVEKMLRERDSEVQALKEKVKEKDAEVERILEGMKRMEREGEERNRMLKENESTIDELRTRCLNMKRWKDEYAELREDYEALQKKLKDEVEDMQVENDRLHNEIRKISKEREELGRMQKKLLDDLEFERNRGSKLEKAFQELRGEYEAVEGQLQKERQFRDSTQESLLEKTRGLERRVKSLNEKLRREEMANRQLMSEKDEMYREIHVLQQSKLDEIFDREAGFNSIKKNLQMEIQRLEMENQRLSVDLMEAKCMGEASEESISATERFCGMLEEERKKRKEIEYQASEHENRNVILSSEVEMLREMVEMERRSKEEVIRGHEKETGLCKAIAGVRKEVEDLGNEIDMAIEGFNGMYLNVLDGYKRDLKECKEQVMSKEQVIEELNGRIVRLGREVEERKEIEEEMSRKVHGLMKQYNGVMNDFSLLSTKCSSLERTVSEKEEEIKGYSERCSEYDKRFEGLVCRVDEEIENLRRSDEERRRCVEKLESGLNGSIAGIRKLDERYKARIEECAQSVLDGERRKLKAMEELCEQLSKKLGELEEEHQGLLDEKMKGLLRIEQLEGELCAFRESEVHRQDMISMYESEISTLKRCTRFKDEVLGSLSGERNPVVVHVSDKEKCQVLDRKRMTVEHELARANDERQSLMAINKKLREEVEKLRGEIDAGRSKMLEMKKKLGCQSLAVGHLSRELEEEREMVRFFRTLGGARKKKV</sequence>
<feature type="chain" id="PRO_0000383331" description="Probable myosin heavy chain ECU04_1000">
    <location>
        <begin position="1"/>
        <end position="1679"/>
    </location>
</feature>
<feature type="domain" description="Myosin N-terminal SH3-like" evidence="4">
    <location>
        <begin position="31"/>
        <end position="79"/>
    </location>
</feature>
<feature type="domain" description="Myosin motor" evidence="3">
    <location>
        <begin position="83"/>
        <end position="754"/>
    </location>
</feature>
<feature type="region of interest" description="Disordered" evidence="5">
    <location>
        <begin position="1"/>
        <end position="22"/>
    </location>
</feature>
<feature type="region of interest" description="Actin-binding" evidence="3">
    <location>
        <begin position="624"/>
        <end position="646"/>
    </location>
</feature>
<feature type="coiled-coil region" evidence="2">
    <location>
        <begin position="823"/>
        <end position="1644"/>
    </location>
</feature>
<feature type="compositionally biased region" description="Polar residues" evidence="5">
    <location>
        <begin position="1"/>
        <end position="14"/>
    </location>
</feature>
<feature type="binding site" evidence="3">
    <location>
        <begin position="176"/>
        <end position="183"/>
    </location>
    <ligand>
        <name>ATP</name>
        <dbReference type="ChEBI" id="CHEBI:30616"/>
    </ligand>
</feature>
<accession>Q8SS35</accession>
<keyword id="KW-0009">Actin-binding</keyword>
<keyword id="KW-0067">ATP-binding</keyword>
<keyword id="KW-0175">Coiled coil</keyword>
<keyword id="KW-0505">Motor protein</keyword>
<keyword id="KW-0518">Myosin</keyword>
<keyword id="KW-0547">Nucleotide-binding</keyword>
<keyword id="KW-1185">Reference proteome</keyword>
<name>Y4A0_ENCCU</name>
<protein>
    <recommendedName>
        <fullName>Probable myosin heavy chain ECU04_1000</fullName>
    </recommendedName>
</protein>
<dbReference type="EMBL" id="AL590444">
    <property type="protein sequence ID" value="CAD25287.3"/>
    <property type="molecule type" value="Genomic_DNA"/>
</dbReference>
<dbReference type="RefSeq" id="NP_584783.2">
    <property type="nucleotide sequence ID" value="NM_001041133.2"/>
</dbReference>
<dbReference type="SMR" id="Q8SS35"/>
<dbReference type="FunCoup" id="Q8SS35">
    <property type="interactions" value="24"/>
</dbReference>
<dbReference type="STRING" id="284813.Q8SS35"/>
<dbReference type="GeneID" id="858931"/>
<dbReference type="KEGG" id="ecu:ECU04_1000"/>
<dbReference type="VEuPathDB" id="MicrosporidiaDB:ECU04_1000"/>
<dbReference type="HOGENOM" id="CLU_000192_7_14_1"/>
<dbReference type="InParanoid" id="Q8SS35"/>
<dbReference type="OrthoDB" id="6108017at2759"/>
<dbReference type="Proteomes" id="UP000000819">
    <property type="component" value="Chromosome IV"/>
</dbReference>
<dbReference type="GO" id="GO:0005737">
    <property type="term" value="C:cytoplasm"/>
    <property type="evidence" value="ECO:0007669"/>
    <property type="project" value="UniProtKB-ARBA"/>
</dbReference>
<dbReference type="GO" id="GO:0016020">
    <property type="term" value="C:membrane"/>
    <property type="evidence" value="ECO:0007669"/>
    <property type="project" value="TreeGrafter"/>
</dbReference>
<dbReference type="GO" id="GO:0016459">
    <property type="term" value="C:myosin complex"/>
    <property type="evidence" value="ECO:0007669"/>
    <property type="project" value="UniProtKB-KW"/>
</dbReference>
<dbReference type="GO" id="GO:0051015">
    <property type="term" value="F:actin filament binding"/>
    <property type="evidence" value="ECO:0007669"/>
    <property type="project" value="InterPro"/>
</dbReference>
<dbReference type="GO" id="GO:0005524">
    <property type="term" value="F:ATP binding"/>
    <property type="evidence" value="ECO:0007669"/>
    <property type="project" value="UniProtKB-KW"/>
</dbReference>
<dbReference type="GO" id="GO:0000146">
    <property type="term" value="F:microfilament motor activity"/>
    <property type="evidence" value="ECO:0007669"/>
    <property type="project" value="TreeGrafter"/>
</dbReference>
<dbReference type="GO" id="GO:0007015">
    <property type="term" value="P:actin filament organization"/>
    <property type="evidence" value="ECO:0007669"/>
    <property type="project" value="TreeGrafter"/>
</dbReference>
<dbReference type="CDD" id="cd01377">
    <property type="entry name" value="MYSc_class_II"/>
    <property type="match status" value="1"/>
</dbReference>
<dbReference type="FunFam" id="1.10.10.820:FF:000001">
    <property type="entry name" value="Myosin heavy chain"/>
    <property type="match status" value="1"/>
</dbReference>
<dbReference type="FunFam" id="3.40.850.10:FF:000101">
    <property type="entry name" value="Slow myosin heavy chain 2"/>
    <property type="match status" value="1"/>
</dbReference>
<dbReference type="Gene3D" id="1.10.10.820">
    <property type="match status" value="1"/>
</dbReference>
<dbReference type="Gene3D" id="1.10.287.1490">
    <property type="match status" value="1"/>
</dbReference>
<dbReference type="Gene3D" id="1.20.5.4820">
    <property type="match status" value="1"/>
</dbReference>
<dbReference type="Gene3D" id="1.20.58.530">
    <property type="match status" value="1"/>
</dbReference>
<dbReference type="Gene3D" id="3.40.850.10">
    <property type="entry name" value="Kinesin motor domain"/>
    <property type="match status" value="1"/>
</dbReference>
<dbReference type="Gene3D" id="2.30.30.360">
    <property type="entry name" value="Myosin S1 fragment, N-terminal"/>
    <property type="match status" value="1"/>
</dbReference>
<dbReference type="Gene3D" id="1.20.120.720">
    <property type="entry name" value="Myosin VI head, motor domain, U50 subdomain"/>
    <property type="match status" value="1"/>
</dbReference>
<dbReference type="InterPro" id="IPR036961">
    <property type="entry name" value="Kinesin_motor_dom_sf"/>
</dbReference>
<dbReference type="InterPro" id="IPR001609">
    <property type="entry name" value="Myosin_head_motor_dom-like"/>
</dbReference>
<dbReference type="InterPro" id="IPR004009">
    <property type="entry name" value="Myosin_N"/>
</dbReference>
<dbReference type="InterPro" id="IPR008989">
    <property type="entry name" value="Myosin_S1_N"/>
</dbReference>
<dbReference type="InterPro" id="IPR027417">
    <property type="entry name" value="P-loop_NTPase"/>
</dbReference>
<dbReference type="PANTHER" id="PTHR13140">
    <property type="entry name" value="MYOSIN"/>
    <property type="match status" value="1"/>
</dbReference>
<dbReference type="PANTHER" id="PTHR13140:SF857">
    <property type="entry name" value="MYOSIN-11"/>
    <property type="match status" value="1"/>
</dbReference>
<dbReference type="Pfam" id="PF00063">
    <property type="entry name" value="Myosin_head"/>
    <property type="match status" value="1"/>
</dbReference>
<dbReference type="PRINTS" id="PR00193">
    <property type="entry name" value="MYOSINHEAVY"/>
</dbReference>
<dbReference type="SMART" id="SM00242">
    <property type="entry name" value="MYSc"/>
    <property type="match status" value="1"/>
</dbReference>
<dbReference type="SUPFAM" id="SSF52540">
    <property type="entry name" value="P-loop containing nucleoside triphosphate hydrolases"/>
    <property type="match status" value="1"/>
</dbReference>
<dbReference type="PROSITE" id="PS51456">
    <property type="entry name" value="MYOSIN_MOTOR"/>
    <property type="match status" value="1"/>
</dbReference>
<dbReference type="PROSITE" id="PS51844">
    <property type="entry name" value="SH3_LIKE"/>
    <property type="match status" value="1"/>
</dbReference>
<comment type="function">
    <text evidence="1">Cellular myosin that appears to play a role in cytokinesis, cell shape, and specialized functions such as secretion and capping.</text>
</comment>
<comment type="developmental stage">
    <text evidence="6">Expressed in late sporogonial stages.</text>
</comment>
<comment type="similarity">
    <text evidence="7">Belongs to the TRAFAC class myosin-kinesin ATPase superfamily. Myosin family.</text>
</comment>
<proteinExistence type="evidence at protein level"/>